<feature type="chain" id="PRO_1000074621" description="Cysteine--tRNA ligase">
    <location>
        <begin position="1"/>
        <end position="480"/>
    </location>
</feature>
<feature type="short sequence motif" description="'HIGH' region">
    <location>
        <begin position="31"/>
        <end position="41"/>
    </location>
</feature>
<feature type="short sequence motif" description="'KMSKS' region">
    <location>
        <begin position="272"/>
        <end position="276"/>
    </location>
</feature>
<feature type="binding site" evidence="1">
    <location>
        <position position="29"/>
    </location>
    <ligand>
        <name>Zn(2+)</name>
        <dbReference type="ChEBI" id="CHEBI:29105"/>
    </ligand>
</feature>
<feature type="binding site" evidence="1">
    <location>
        <position position="215"/>
    </location>
    <ligand>
        <name>Zn(2+)</name>
        <dbReference type="ChEBI" id="CHEBI:29105"/>
    </ligand>
</feature>
<feature type="binding site" evidence="1">
    <location>
        <position position="240"/>
    </location>
    <ligand>
        <name>Zn(2+)</name>
        <dbReference type="ChEBI" id="CHEBI:29105"/>
    </ligand>
</feature>
<feature type="binding site" evidence="1">
    <location>
        <position position="244"/>
    </location>
    <ligand>
        <name>Zn(2+)</name>
        <dbReference type="ChEBI" id="CHEBI:29105"/>
    </ligand>
</feature>
<feature type="binding site" evidence="1">
    <location>
        <position position="275"/>
    </location>
    <ligand>
        <name>ATP</name>
        <dbReference type="ChEBI" id="CHEBI:30616"/>
    </ligand>
</feature>
<organism>
    <name type="scientific">Microcystis aeruginosa (strain NIES-843 / IAM M-2473)</name>
    <dbReference type="NCBI Taxonomy" id="449447"/>
    <lineage>
        <taxon>Bacteria</taxon>
        <taxon>Bacillati</taxon>
        <taxon>Cyanobacteriota</taxon>
        <taxon>Cyanophyceae</taxon>
        <taxon>Oscillatoriophycideae</taxon>
        <taxon>Chroococcales</taxon>
        <taxon>Microcystaceae</taxon>
        <taxon>Microcystis</taxon>
    </lineage>
</organism>
<proteinExistence type="inferred from homology"/>
<keyword id="KW-0030">Aminoacyl-tRNA synthetase</keyword>
<keyword id="KW-0067">ATP-binding</keyword>
<keyword id="KW-0963">Cytoplasm</keyword>
<keyword id="KW-0436">Ligase</keyword>
<keyword id="KW-0479">Metal-binding</keyword>
<keyword id="KW-0547">Nucleotide-binding</keyword>
<keyword id="KW-0648">Protein biosynthesis</keyword>
<keyword id="KW-0862">Zinc</keyword>
<protein>
    <recommendedName>
        <fullName evidence="1">Cysteine--tRNA ligase</fullName>
        <ecNumber evidence="1">6.1.1.16</ecNumber>
    </recommendedName>
    <alternativeName>
        <fullName evidence="1">Cysteinyl-tRNA synthetase</fullName>
        <shortName evidence="1">CysRS</shortName>
    </alternativeName>
</protein>
<sequence length="480" mass="53867">MTLILYNTLSRREEPFTPLIPGIVSMYCCGITVYDYCHLGHARTCVVWDVVRRYLEYLGYKVRYIQNFTDIDDKILNRAKNEHTTMAAVAERFIEAYFEDMAKLGVRPADAYPRATHTLDGIKRLVYELEQKGYAYPSDGDVYYSVRRFSDYGKLSGRKLDDLQAGASGRVETDDPEAIKKQDPFDFALWKGAKSGEPSWDSPWGQGRPGWHIECSAMVKEQLGETIDIHVGGSDLIFPHHENEIAQSEAATGKPLAHYWLHNGMVKVAGEKMSKSLGNFITIRELLAKYDPLAVRLLILGAQYRKPIDFSDEGLQAATNGWHTLQEGLSFGYKHLPPDNPAITDQELENRFQEAVNHDFNFAGGLAVLFEIAKELRKEGNNLTHAGKTDSNLAQLAVKWHTLVKLSRVLGLEMAADQGETPVSEGISAADIENLIQQRTEAKKAKNYAESDRIRAELKAQGITLIDQPGGVTKWLREGD</sequence>
<dbReference type="EC" id="6.1.1.16" evidence="1"/>
<dbReference type="EMBL" id="AP009552">
    <property type="protein sequence ID" value="BAG02657.1"/>
    <property type="molecule type" value="Genomic_DNA"/>
</dbReference>
<dbReference type="RefSeq" id="WP_012265869.1">
    <property type="nucleotide sequence ID" value="NC_010296.1"/>
</dbReference>
<dbReference type="SMR" id="B0JJL5"/>
<dbReference type="STRING" id="449447.MAE_28350"/>
<dbReference type="PaxDb" id="449447-MAE_28350"/>
<dbReference type="EnsemblBacteria" id="BAG02657">
    <property type="protein sequence ID" value="BAG02657"/>
    <property type="gene ID" value="MAE_28350"/>
</dbReference>
<dbReference type="KEGG" id="mar:MAE_28350"/>
<dbReference type="PATRIC" id="fig|449447.4.peg.2592"/>
<dbReference type="eggNOG" id="COG0215">
    <property type="taxonomic scope" value="Bacteria"/>
</dbReference>
<dbReference type="HOGENOM" id="CLU_013528_0_1_3"/>
<dbReference type="BioCyc" id="MAER449447:MAE_RS12370-MONOMER"/>
<dbReference type="Proteomes" id="UP000001510">
    <property type="component" value="Chromosome"/>
</dbReference>
<dbReference type="GO" id="GO:0005829">
    <property type="term" value="C:cytosol"/>
    <property type="evidence" value="ECO:0007669"/>
    <property type="project" value="TreeGrafter"/>
</dbReference>
<dbReference type="GO" id="GO:0005524">
    <property type="term" value="F:ATP binding"/>
    <property type="evidence" value="ECO:0007669"/>
    <property type="project" value="UniProtKB-UniRule"/>
</dbReference>
<dbReference type="GO" id="GO:0004817">
    <property type="term" value="F:cysteine-tRNA ligase activity"/>
    <property type="evidence" value="ECO:0007669"/>
    <property type="project" value="UniProtKB-UniRule"/>
</dbReference>
<dbReference type="GO" id="GO:0008270">
    <property type="term" value="F:zinc ion binding"/>
    <property type="evidence" value="ECO:0007669"/>
    <property type="project" value="UniProtKB-UniRule"/>
</dbReference>
<dbReference type="GO" id="GO:0006423">
    <property type="term" value="P:cysteinyl-tRNA aminoacylation"/>
    <property type="evidence" value="ECO:0007669"/>
    <property type="project" value="UniProtKB-UniRule"/>
</dbReference>
<dbReference type="CDD" id="cd00672">
    <property type="entry name" value="CysRS_core"/>
    <property type="match status" value="1"/>
</dbReference>
<dbReference type="FunFam" id="3.40.50.620:FF:000009">
    <property type="entry name" value="Cysteine--tRNA ligase"/>
    <property type="match status" value="1"/>
</dbReference>
<dbReference type="Gene3D" id="1.20.120.1910">
    <property type="entry name" value="Cysteine-tRNA ligase, C-terminal anti-codon recognition domain"/>
    <property type="match status" value="1"/>
</dbReference>
<dbReference type="Gene3D" id="3.40.50.620">
    <property type="entry name" value="HUPs"/>
    <property type="match status" value="1"/>
</dbReference>
<dbReference type="HAMAP" id="MF_00041">
    <property type="entry name" value="Cys_tRNA_synth"/>
    <property type="match status" value="1"/>
</dbReference>
<dbReference type="InterPro" id="IPR015803">
    <property type="entry name" value="Cys-tRNA-ligase"/>
</dbReference>
<dbReference type="InterPro" id="IPR015273">
    <property type="entry name" value="Cys-tRNA-synt_Ia_DALR"/>
</dbReference>
<dbReference type="InterPro" id="IPR024909">
    <property type="entry name" value="Cys-tRNA/MSH_ligase"/>
</dbReference>
<dbReference type="InterPro" id="IPR014729">
    <property type="entry name" value="Rossmann-like_a/b/a_fold"/>
</dbReference>
<dbReference type="InterPro" id="IPR032678">
    <property type="entry name" value="tRNA-synt_1_cat_dom"/>
</dbReference>
<dbReference type="InterPro" id="IPR009080">
    <property type="entry name" value="tRNAsynth_Ia_anticodon-bd"/>
</dbReference>
<dbReference type="NCBIfam" id="TIGR00435">
    <property type="entry name" value="cysS"/>
    <property type="match status" value="1"/>
</dbReference>
<dbReference type="PANTHER" id="PTHR10890:SF3">
    <property type="entry name" value="CYSTEINE--TRNA LIGASE, CYTOPLASMIC"/>
    <property type="match status" value="1"/>
</dbReference>
<dbReference type="PANTHER" id="PTHR10890">
    <property type="entry name" value="CYSTEINYL-TRNA SYNTHETASE"/>
    <property type="match status" value="1"/>
</dbReference>
<dbReference type="Pfam" id="PF09190">
    <property type="entry name" value="DALR_2"/>
    <property type="match status" value="1"/>
</dbReference>
<dbReference type="Pfam" id="PF01406">
    <property type="entry name" value="tRNA-synt_1e"/>
    <property type="match status" value="1"/>
</dbReference>
<dbReference type="PRINTS" id="PR00983">
    <property type="entry name" value="TRNASYNTHCYS"/>
</dbReference>
<dbReference type="SMART" id="SM00840">
    <property type="entry name" value="DALR_2"/>
    <property type="match status" value="1"/>
</dbReference>
<dbReference type="SUPFAM" id="SSF47323">
    <property type="entry name" value="Anticodon-binding domain of a subclass of class I aminoacyl-tRNA synthetases"/>
    <property type="match status" value="1"/>
</dbReference>
<dbReference type="SUPFAM" id="SSF52374">
    <property type="entry name" value="Nucleotidylyl transferase"/>
    <property type="match status" value="1"/>
</dbReference>
<comment type="catalytic activity">
    <reaction evidence="1">
        <text>tRNA(Cys) + L-cysteine + ATP = L-cysteinyl-tRNA(Cys) + AMP + diphosphate</text>
        <dbReference type="Rhea" id="RHEA:17773"/>
        <dbReference type="Rhea" id="RHEA-COMP:9661"/>
        <dbReference type="Rhea" id="RHEA-COMP:9679"/>
        <dbReference type="ChEBI" id="CHEBI:30616"/>
        <dbReference type="ChEBI" id="CHEBI:33019"/>
        <dbReference type="ChEBI" id="CHEBI:35235"/>
        <dbReference type="ChEBI" id="CHEBI:78442"/>
        <dbReference type="ChEBI" id="CHEBI:78517"/>
        <dbReference type="ChEBI" id="CHEBI:456215"/>
        <dbReference type="EC" id="6.1.1.16"/>
    </reaction>
</comment>
<comment type="cofactor">
    <cofactor evidence="1">
        <name>Zn(2+)</name>
        <dbReference type="ChEBI" id="CHEBI:29105"/>
    </cofactor>
    <text evidence="1">Binds 1 zinc ion per subunit.</text>
</comment>
<comment type="subunit">
    <text evidence="1">Monomer.</text>
</comment>
<comment type="subcellular location">
    <subcellularLocation>
        <location evidence="1">Cytoplasm</location>
    </subcellularLocation>
</comment>
<comment type="similarity">
    <text evidence="1">Belongs to the class-I aminoacyl-tRNA synthetase family.</text>
</comment>
<name>SYC_MICAN</name>
<accession>B0JJL5</accession>
<gene>
    <name evidence="1" type="primary">cysS</name>
    <name type="ordered locus">MAE_28350</name>
</gene>
<reference key="1">
    <citation type="journal article" date="2007" name="DNA Res.">
        <title>Complete genomic structure of the bloom-forming toxic cyanobacterium Microcystis aeruginosa NIES-843.</title>
        <authorList>
            <person name="Kaneko T."/>
            <person name="Nakajima N."/>
            <person name="Okamoto S."/>
            <person name="Suzuki I."/>
            <person name="Tanabe Y."/>
            <person name="Tamaoki M."/>
            <person name="Nakamura Y."/>
            <person name="Kasai F."/>
            <person name="Watanabe A."/>
            <person name="Kawashima K."/>
            <person name="Kishida Y."/>
            <person name="Ono A."/>
            <person name="Shimizu Y."/>
            <person name="Takahashi C."/>
            <person name="Minami C."/>
            <person name="Fujishiro T."/>
            <person name="Kohara M."/>
            <person name="Katoh M."/>
            <person name="Nakazaki N."/>
            <person name="Nakayama S."/>
            <person name="Yamada M."/>
            <person name="Tabata S."/>
            <person name="Watanabe M.M."/>
        </authorList>
    </citation>
    <scope>NUCLEOTIDE SEQUENCE [LARGE SCALE GENOMIC DNA]</scope>
    <source>
        <strain>NIES-843 / IAM M-247</strain>
    </source>
</reference>
<evidence type="ECO:0000255" key="1">
    <source>
        <dbReference type="HAMAP-Rule" id="MF_00041"/>
    </source>
</evidence>